<feature type="chain" id="PRO_1000048029" description="Protein RecA">
    <location>
        <begin position="1"/>
        <end position="347"/>
    </location>
</feature>
<feature type="region of interest" description="Disordered" evidence="2">
    <location>
        <begin position="328"/>
        <end position="347"/>
    </location>
</feature>
<feature type="binding site" evidence="1">
    <location>
        <begin position="66"/>
        <end position="73"/>
    </location>
    <ligand>
        <name>ATP</name>
        <dbReference type="ChEBI" id="CHEBI:30616"/>
    </ligand>
</feature>
<comment type="function">
    <text evidence="1">Can catalyze the hydrolysis of ATP in the presence of single-stranded DNA, the ATP-dependent uptake of single-stranded DNA by duplex DNA, and the ATP-dependent hybridization of homologous single-stranded DNAs. It interacts with LexA causing its activation and leading to its autocatalytic cleavage.</text>
</comment>
<comment type="subcellular location">
    <subcellularLocation>
        <location evidence="1">Cytoplasm</location>
    </subcellularLocation>
</comment>
<comment type="similarity">
    <text evidence="1">Belongs to the RecA family.</text>
</comment>
<accession>Q31F89</accession>
<proteinExistence type="inferred from homology"/>
<reference key="1">
    <citation type="journal article" date="2006" name="PLoS Biol.">
        <title>The genome of deep-sea vent chemolithoautotroph Thiomicrospira crunogena XCL-2.</title>
        <authorList>
            <person name="Scott K.M."/>
            <person name="Sievert S.M."/>
            <person name="Abril F.N."/>
            <person name="Ball L.A."/>
            <person name="Barrett C.J."/>
            <person name="Blake R.A."/>
            <person name="Boller A.J."/>
            <person name="Chain P.S.G."/>
            <person name="Clark J.A."/>
            <person name="Davis C.R."/>
            <person name="Detter C."/>
            <person name="Do K.F."/>
            <person name="Dobrinski K.P."/>
            <person name="Faza B.I."/>
            <person name="Fitzpatrick K.A."/>
            <person name="Freyermuth S.K."/>
            <person name="Harmer T.L."/>
            <person name="Hauser L.J."/>
            <person name="Huegler M."/>
            <person name="Kerfeld C.A."/>
            <person name="Klotz M.G."/>
            <person name="Kong W.W."/>
            <person name="Land M."/>
            <person name="Lapidus A."/>
            <person name="Larimer F.W."/>
            <person name="Longo D.L."/>
            <person name="Lucas S."/>
            <person name="Malfatti S.A."/>
            <person name="Massey S.E."/>
            <person name="Martin D.D."/>
            <person name="McCuddin Z."/>
            <person name="Meyer F."/>
            <person name="Moore J.L."/>
            <person name="Ocampo L.H. Jr."/>
            <person name="Paul J.H."/>
            <person name="Paulsen I.T."/>
            <person name="Reep D.K."/>
            <person name="Ren Q."/>
            <person name="Ross R.L."/>
            <person name="Sato P.Y."/>
            <person name="Thomas P."/>
            <person name="Tinkham L.E."/>
            <person name="Zeruth G.T."/>
        </authorList>
    </citation>
    <scope>NUCLEOTIDE SEQUENCE [LARGE SCALE GENOMIC DNA]</scope>
    <source>
        <strain>DSM 25203 / XCL-2</strain>
    </source>
</reference>
<keyword id="KW-0067">ATP-binding</keyword>
<keyword id="KW-0963">Cytoplasm</keyword>
<keyword id="KW-0227">DNA damage</keyword>
<keyword id="KW-0233">DNA recombination</keyword>
<keyword id="KW-0234">DNA repair</keyword>
<keyword id="KW-0238">DNA-binding</keyword>
<keyword id="KW-0547">Nucleotide-binding</keyword>
<keyword id="KW-0742">SOS response</keyword>
<evidence type="ECO:0000255" key="1">
    <source>
        <dbReference type="HAMAP-Rule" id="MF_00268"/>
    </source>
</evidence>
<evidence type="ECO:0000256" key="2">
    <source>
        <dbReference type="SAM" id="MobiDB-lite"/>
    </source>
</evidence>
<gene>
    <name evidence="1" type="primary">recA</name>
    <name type="ordered locus">Tcr_1592</name>
</gene>
<dbReference type="EMBL" id="CP000109">
    <property type="protein sequence ID" value="ABB42184.1"/>
    <property type="molecule type" value="Genomic_DNA"/>
</dbReference>
<dbReference type="SMR" id="Q31F89"/>
<dbReference type="STRING" id="317025.Tcr_1592"/>
<dbReference type="KEGG" id="tcx:Tcr_1592"/>
<dbReference type="eggNOG" id="COG0468">
    <property type="taxonomic scope" value="Bacteria"/>
</dbReference>
<dbReference type="HOGENOM" id="CLU_040469_3_2_6"/>
<dbReference type="OrthoDB" id="9776733at2"/>
<dbReference type="GO" id="GO:0005829">
    <property type="term" value="C:cytosol"/>
    <property type="evidence" value="ECO:0007669"/>
    <property type="project" value="TreeGrafter"/>
</dbReference>
<dbReference type="GO" id="GO:0005524">
    <property type="term" value="F:ATP binding"/>
    <property type="evidence" value="ECO:0007669"/>
    <property type="project" value="UniProtKB-UniRule"/>
</dbReference>
<dbReference type="GO" id="GO:0016887">
    <property type="term" value="F:ATP hydrolysis activity"/>
    <property type="evidence" value="ECO:0007669"/>
    <property type="project" value="InterPro"/>
</dbReference>
<dbReference type="GO" id="GO:0140664">
    <property type="term" value="F:ATP-dependent DNA damage sensor activity"/>
    <property type="evidence" value="ECO:0007669"/>
    <property type="project" value="InterPro"/>
</dbReference>
<dbReference type="GO" id="GO:0003684">
    <property type="term" value="F:damaged DNA binding"/>
    <property type="evidence" value="ECO:0007669"/>
    <property type="project" value="UniProtKB-UniRule"/>
</dbReference>
<dbReference type="GO" id="GO:0003697">
    <property type="term" value="F:single-stranded DNA binding"/>
    <property type="evidence" value="ECO:0007669"/>
    <property type="project" value="UniProtKB-UniRule"/>
</dbReference>
<dbReference type="GO" id="GO:0006310">
    <property type="term" value="P:DNA recombination"/>
    <property type="evidence" value="ECO:0007669"/>
    <property type="project" value="UniProtKB-UniRule"/>
</dbReference>
<dbReference type="GO" id="GO:0006281">
    <property type="term" value="P:DNA repair"/>
    <property type="evidence" value="ECO:0007669"/>
    <property type="project" value="UniProtKB-UniRule"/>
</dbReference>
<dbReference type="GO" id="GO:0009432">
    <property type="term" value="P:SOS response"/>
    <property type="evidence" value="ECO:0007669"/>
    <property type="project" value="UniProtKB-UniRule"/>
</dbReference>
<dbReference type="CDD" id="cd00983">
    <property type="entry name" value="RecA"/>
    <property type="match status" value="1"/>
</dbReference>
<dbReference type="FunFam" id="3.40.50.300:FF:000087">
    <property type="entry name" value="Recombinase RecA"/>
    <property type="match status" value="1"/>
</dbReference>
<dbReference type="Gene3D" id="3.40.50.300">
    <property type="entry name" value="P-loop containing nucleotide triphosphate hydrolases"/>
    <property type="match status" value="1"/>
</dbReference>
<dbReference type="HAMAP" id="MF_00268">
    <property type="entry name" value="RecA"/>
    <property type="match status" value="1"/>
</dbReference>
<dbReference type="InterPro" id="IPR003593">
    <property type="entry name" value="AAA+_ATPase"/>
</dbReference>
<dbReference type="InterPro" id="IPR013765">
    <property type="entry name" value="DNA_recomb/repair_RecA"/>
</dbReference>
<dbReference type="InterPro" id="IPR020584">
    <property type="entry name" value="DNA_recomb/repair_RecA_CS"/>
</dbReference>
<dbReference type="InterPro" id="IPR027417">
    <property type="entry name" value="P-loop_NTPase"/>
</dbReference>
<dbReference type="InterPro" id="IPR049261">
    <property type="entry name" value="RecA-like_C"/>
</dbReference>
<dbReference type="InterPro" id="IPR049428">
    <property type="entry name" value="RecA-like_N"/>
</dbReference>
<dbReference type="InterPro" id="IPR020588">
    <property type="entry name" value="RecA_ATP-bd"/>
</dbReference>
<dbReference type="InterPro" id="IPR023400">
    <property type="entry name" value="RecA_C_sf"/>
</dbReference>
<dbReference type="InterPro" id="IPR020587">
    <property type="entry name" value="RecA_monomer-monomer_interface"/>
</dbReference>
<dbReference type="NCBIfam" id="TIGR02012">
    <property type="entry name" value="tigrfam_recA"/>
    <property type="match status" value="1"/>
</dbReference>
<dbReference type="PANTHER" id="PTHR45900:SF1">
    <property type="entry name" value="MITOCHONDRIAL DNA REPAIR PROTEIN RECA HOMOLOG-RELATED"/>
    <property type="match status" value="1"/>
</dbReference>
<dbReference type="PANTHER" id="PTHR45900">
    <property type="entry name" value="RECA"/>
    <property type="match status" value="1"/>
</dbReference>
<dbReference type="Pfam" id="PF00154">
    <property type="entry name" value="RecA"/>
    <property type="match status" value="1"/>
</dbReference>
<dbReference type="Pfam" id="PF21096">
    <property type="entry name" value="RecA_C"/>
    <property type="match status" value="1"/>
</dbReference>
<dbReference type="PRINTS" id="PR00142">
    <property type="entry name" value="RECA"/>
</dbReference>
<dbReference type="SMART" id="SM00382">
    <property type="entry name" value="AAA"/>
    <property type="match status" value="1"/>
</dbReference>
<dbReference type="SUPFAM" id="SSF52540">
    <property type="entry name" value="P-loop containing nucleoside triphosphate hydrolases"/>
    <property type="match status" value="1"/>
</dbReference>
<dbReference type="SUPFAM" id="SSF54752">
    <property type="entry name" value="RecA protein, C-terminal domain"/>
    <property type="match status" value="1"/>
</dbReference>
<dbReference type="PROSITE" id="PS00321">
    <property type="entry name" value="RECA_1"/>
    <property type="match status" value="1"/>
</dbReference>
<dbReference type="PROSITE" id="PS50162">
    <property type="entry name" value="RECA_2"/>
    <property type="match status" value="1"/>
</dbReference>
<dbReference type="PROSITE" id="PS50163">
    <property type="entry name" value="RECA_3"/>
    <property type="match status" value="1"/>
</dbReference>
<name>RECA_HYDCU</name>
<protein>
    <recommendedName>
        <fullName evidence="1">Protein RecA</fullName>
    </recommendedName>
    <alternativeName>
        <fullName evidence="1">Recombinase A</fullName>
    </alternativeName>
</protein>
<sequence length="347" mass="37656">MDENKKKALEAALGQIEKQFGKGSIMRMGDKGAIRDIDSVSTGSLGLDVALGIGGLPRGRVVEIYGPESSGKTTLTLHAIAEMQKMGGTAAFVDAEHALDPIYAEKLGVDIDNLLVSQPDTGEQALEITDSLVRSGAVDIVIVDSVAALTPKAEIEGDMGDSHMGLQARLMSQALRKLTANIKRTNTLVIFINQIRMKIGVMFGNPETTTGGNALKFYSSVRLDIRRIGAIKKGDEILGNETRVKVVKNKVSPPFKQVEFEILYGQGISREGEVIDLGVKEKLIEKAGAWYSYQGQKIGQGKDNVRQFLKDNPDIYETLQVQIKERLMPKPNAPKATDEALDETGTD</sequence>
<organism>
    <name type="scientific">Hydrogenovibrio crunogenus (strain DSM 25203 / XCL-2)</name>
    <name type="common">Thiomicrospira crunogena</name>
    <dbReference type="NCBI Taxonomy" id="317025"/>
    <lineage>
        <taxon>Bacteria</taxon>
        <taxon>Pseudomonadati</taxon>
        <taxon>Pseudomonadota</taxon>
        <taxon>Gammaproteobacteria</taxon>
        <taxon>Thiotrichales</taxon>
        <taxon>Piscirickettsiaceae</taxon>
        <taxon>Hydrogenovibrio</taxon>
    </lineage>
</organism>